<name>DP2L_PYRFU</name>
<dbReference type="EC" id="2.7.7.7" evidence="1"/>
<dbReference type="EC" id="3.1.11.1" evidence="1"/>
<dbReference type="EMBL" id="D84670">
    <property type="protein sequence ID" value="BAA25164.1"/>
    <property type="molecule type" value="Genomic_DNA"/>
</dbReference>
<dbReference type="EMBL" id="AE009950">
    <property type="protein sequence ID" value="AAL80143.1"/>
    <property type="molecule type" value="Genomic_DNA"/>
</dbReference>
<dbReference type="PIR" id="T43934">
    <property type="entry name" value="T43934"/>
</dbReference>
<dbReference type="RefSeq" id="WP_014835497.1">
    <property type="nucleotide sequence ID" value="NZ_CP023154.1"/>
</dbReference>
<dbReference type="EMDB" id="EMD-50140"/>
<dbReference type="EMDB" id="EMD-50143"/>
<dbReference type="SMR" id="P81409"/>
<dbReference type="STRING" id="186497.PF0019"/>
<dbReference type="PaxDb" id="186497-PF0019"/>
<dbReference type="KEGG" id="pfu:PF0019"/>
<dbReference type="PATRIC" id="fig|186497.12.peg.21"/>
<dbReference type="eggNOG" id="arCOG04447">
    <property type="taxonomic scope" value="Archaea"/>
</dbReference>
<dbReference type="HOGENOM" id="CLU_001154_0_0_2"/>
<dbReference type="OrthoDB" id="7529at2157"/>
<dbReference type="PhylomeDB" id="P81409"/>
<dbReference type="BRENDA" id="2.7.7.7">
    <property type="organism ID" value="5243"/>
</dbReference>
<dbReference type="Proteomes" id="UP000001013">
    <property type="component" value="Chromosome"/>
</dbReference>
<dbReference type="GO" id="GO:0003677">
    <property type="term" value="F:DNA binding"/>
    <property type="evidence" value="ECO:0007669"/>
    <property type="project" value="UniProtKB-UniRule"/>
</dbReference>
<dbReference type="GO" id="GO:0003887">
    <property type="term" value="F:DNA-directed DNA polymerase activity"/>
    <property type="evidence" value="ECO:0007669"/>
    <property type="project" value="UniProtKB-UniRule"/>
</dbReference>
<dbReference type="GO" id="GO:0008310">
    <property type="term" value="F:single-stranded DNA 3'-5' DNA exonuclease activity"/>
    <property type="evidence" value="ECO:0007669"/>
    <property type="project" value="UniProtKB-EC"/>
</dbReference>
<dbReference type="GO" id="GO:0006308">
    <property type="term" value="P:DNA catabolic process"/>
    <property type="evidence" value="ECO:0007669"/>
    <property type="project" value="UniProtKB-UniRule"/>
</dbReference>
<dbReference type="GO" id="GO:0006261">
    <property type="term" value="P:DNA-templated DNA replication"/>
    <property type="evidence" value="ECO:0007669"/>
    <property type="project" value="UniProtKB-UniRule"/>
</dbReference>
<dbReference type="HAMAP" id="MF_00324">
    <property type="entry name" value="DNApol_II_L_arch"/>
    <property type="match status" value="1"/>
</dbReference>
<dbReference type="InterPro" id="IPR004475">
    <property type="entry name" value="PolC_DP2"/>
</dbReference>
<dbReference type="InterPro" id="IPR056172">
    <property type="entry name" value="PolC_DP2_cat_dom"/>
</dbReference>
<dbReference type="InterPro" id="IPR056171">
    <property type="entry name" value="PolC_DP2_central_dom"/>
</dbReference>
<dbReference type="InterPro" id="IPR016033">
    <property type="entry name" value="PolC_DP2_N"/>
</dbReference>
<dbReference type="NCBIfam" id="TIGR00354">
    <property type="entry name" value="polC"/>
    <property type="match status" value="1"/>
</dbReference>
<dbReference type="NCBIfam" id="NF003103">
    <property type="entry name" value="PRK04023.1"/>
    <property type="match status" value="1"/>
</dbReference>
<dbReference type="PANTHER" id="PTHR42210">
    <property type="entry name" value="DNA POLYMERASE II LARGE SUBUNIT"/>
    <property type="match status" value="1"/>
</dbReference>
<dbReference type="PANTHER" id="PTHR42210:SF1">
    <property type="entry name" value="DNA POLYMERASE II LARGE SUBUNIT"/>
    <property type="match status" value="1"/>
</dbReference>
<dbReference type="Pfam" id="PF24846">
    <property type="entry name" value="PolC_DP2_cat"/>
    <property type="match status" value="1"/>
</dbReference>
<dbReference type="Pfam" id="PF24844">
    <property type="entry name" value="PolC_DP2_central"/>
    <property type="match status" value="1"/>
</dbReference>
<dbReference type="Pfam" id="PF03833">
    <property type="entry name" value="PolC_DP2_N"/>
    <property type="match status" value="1"/>
</dbReference>
<dbReference type="PIRSF" id="PIRSF016275">
    <property type="entry name" value="PolC_DP2"/>
    <property type="match status" value="1"/>
</dbReference>
<reference key="1">
    <citation type="journal article" date="1997" name="Genes Cells">
        <title>A novel DNA polymerase in the hyperthermophilic archaeon, Pyrococcus furiosus: gene cloning, expression, and characterization.</title>
        <authorList>
            <person name="Uemori T."/>
            <person name="Sato Y."/>
            <person name="Kato I."/>
            <person name="Doi H."/>
            <person name="Ishino Y."/>
        </authorList>
    </citation>
    <scope>NUCLEOTIDE SEQUENCE [GENOMIC DNA]</scope>
    <scope>PROTEIN SEQUENCE OF 1-15</scope>
    <source>
        <strain>ATCC 43587 / DSM 3638 / JCM 8422 / Vc1</strain>
    </source>
</reference>
<reference key="2">
    <citation type="journal article" date="1999" name="Genetics">
        <title>Divergence of the hyperthermophilic archaea Pyrococcus furiosus and P. horikoshii inferred from complete genomic sequences.</title>
        <authorList>
            <person name="Maeder D.L."/>
            <person name="Weiss R.B."/>
            <person name="Dunn D.M."/>
            <person name="Cherry J.L."/>
            <person name="Gonzalez J.M."/>
            <person name="DiRuggiero J."/>
            <person name="Robb F.T."/>
        </authorList>
    </citation>
    <scope>NUCLEOTIDE SEQUENCE [LARGE SCALE GENOMIC DNA]</scope>
    <source>
        <strain>ATCC 43587 / DSM 3638 / JCM 8422 / Vc1</strain>
    </source>
</reference>
<reference key="3">
    <citation type="journal article" date="1995" name="Biol. Pharm. Bull.">
        <title>A non-alpha-like DNA polymerase from the hyperthermophilic archaeon Pyrococcus furiosus.</title>
        <authorList>
            <person name="Imamura M."/>
            <person name="Uemori T."/>
            <person name="Kato I."/>
            <person name="Doi H."/>
            <person name="Ishino Y."/>
        </authorList>
    </citation>
    <scope>CHARACTERIZATION</scope>
    <source>
        <strain>ATCC 43587 / DSM 3638 / JCM 8422 / Vc1</strain>
    </source>
</reference>
<evidence type="ECO:0000255" key="1">
    <source>
        <dbReference type="HAMAP-Rule" id="MF_00324"/>
    </source>
</evidence>
<evidence type="ECO:0000256" key="2">
    <source>
        <dbReference type="SAM" id="MobiDB-lite"/>
    </source>
</evidence>
<evidence type="ECO:0000305" key="3"/>
<gene>
    <name type="primary">polC</name>
    <name type="ordered locus">PF0019</name>
</gene>
<feature type="chain" id="PRO_0000152579" description="DNA polymerase II large subunit">
    <location>
        <begin position="1"/>
        <end position="1263"/>
    </location>
</feature>
<feature type="region of interest" description="Disordered" evidence="2">
    <location>
        <begin position="1224"/>
        <end position="1250"/>
    </location>
</feature>
<feature type="compositionally biased region" description="Basic and acidic residues" evidence="2">
    <location>
        <begin position="1235"/>
        <end position="1244"/>
    </location>
</feature>
<feature type="sequence conflict" description="In Ref. 1; BAA25164." evidence="3" ref="1">
    <original>G</original>
    <variation>R</variation>
    <location>
        <position position="1030"/>
    </location>
</feature>
<feature type="sequence conflict" description="In Ref. 1; BAA25164." evidence="3" ref="1">
    <original>R</original>
    <variation>G</variation>
    <location>
        <position position="1034"/>
    </location>
</feature>
<sequence>MELPKEIEEYFEMLQREIDKAYEIAKKARSQGKDPSTDVEIPQATDMAGRVESLVGPPGVAQRIRELLKEYDKEIVALKIVDEIIEGKFGDFGSKEKYAEQAVRTALAILTEGIVSAPLEGIADVKIKRNTWADNSEYLALYYAGPIRSSGGTAQALSVLVGDYVRRKLGLDRFKPSGKHIERMVEEVDLYHRAVSRLQYHPSPDEVRLAMRNIPIEITGEATDDVEVSHRDVEGVETNQLRGGAILVLAEGVLQKAKKLVKYIDKMGIDGWEWLKEFVEAKEKGEEIEESESKAEESKVETRVEVEKGFYYKLYEKFRAEIAPSEKYAKEIIGGRPLFAGPSENGGFRLRYGRSRVSGFATWSINPATMVLVDEFLAIGTQMKTERPGKGAVVTPATTAEGPIVKLKDGSVVRVDDYNLALKIRDEVEEILYLGDAIIAFGDFVENNQTLLPANYVEEWWIQEFVKAVNEAYEVELRPFEENPRESVEEAAEYLEVDPEFLAKMLYDPLRVKPPVELAIHFSEILEIPLHPYYTLYWNTVNPKDVERLWGVLKDKATIEWGTFRGIKFAKKIEISLDDLGSLKRTLELLGLPHTVREGIVVVDYPWSAALLTPLGNLEWEFKAKPFYTVIDIINENNQIKLRDRGISWIGARMGRPEKAKERKMKPPVQVLFPIGLAGGSSRDIKKAAEEGKIAEVEIAFFKCPKCGHVGPETLCPECGIRKELIWTCPKCGAEYTNSQAEGYSYSCPKCNVKLKPFTKRKIKPSELLNRAMENVKVYGVDKLKGVMGMTSGWKIAEPLEKGLLRAKNEVYVFKDGTIRFDATDAPITHFRPREIGVSVEKLRELGYTHDFEGKPLVSEDQIVELKPQDVILSKEAGKYLLRVARFVDDLLEKFYGLPRFYNAEKMEDLIGHLVIGLAPHTSAGIVGRIIGFVDALVGYAHPYFHAAKRRNCDGDEDSVMLLLDALLNFSRYYLPEKRGGKMDAPLVITTRLDPREVDSEVHNMDVVRYYPLEFYEATYELKSPKELVGVIERVEDRLGKPEMYYGIKFTHDTDDIALGPKMSLYKQLGDMEEKVKRQLTLAERIRAVDQHYVAETILNSHLIPDLRGNLRSFTRQEFRCVKCNTKYRRPPLDGKCPVCGGKIVLTVSKGAIEKYLGTAKMLVANYNVKPYTRQRICLTEKDIDSLFEYLFPEAQLTLIVDPNDICMKMIKERTGETVQGGLLENFNSSGNNGKKIEKKEKKAKEKPKKKKVISLDDFFSKR</sequence>
<keyword id="KW-0903">Direct protein sequencing</keyword>
<keyword id="KW-0235">DNA replication</keyword>
<keyword id="KW-0238">DNA-binding</keyword>
<keyword id="KW-0239">DNA-directed DNA polymerase</keyword>
<keyword id="KW-0269">Exonuclease</keyword>
<keyword id="KW-0378">Hydrolase</keyword>
<keyword id="KW-0511">Multifunctional enzyme</keyword>
<keyword id="KW-0540">Nuclease</keyword>
<keyword id="KW-0548">Nucleotidyltransferase</keyword>
<keyword id="KW-1185">Reference proteome</keyword>
<keyword id="KW-0808">Transferase</keyword>
<proteinExistence type="evidence at protein level"/>
<organism>
    <name type="scientific">Pyrococcus furiosus (strain ATCC 43587 / DSM 3638 / JCM 8422 / Vc1)</name>
    <dbReference type="NCBI Taxonomy" id="186497"/>
    <lineage>
        <taxon>Archaea</taxon>
        <taxon>Methanobacteriati</taxon>
        <taxon>Methanobacteriota</taxon>
        <taxon>Thermococci</taxon>
        <taxon>Thermococcales</taxon>
        <taxon>Thermococcaceae</taxon>
        <taxon>Pyrococcus</taxon>
    </lineage>
</organism>
<accession>P81409</accession>
<protein>
    <recommendedName>
        <fullName>DNA polymerase II large subunit</fullName>
        <shortName>Pol II</shortName>
        <ecNumber evidence="1">2.7.7.7</ecNumber>
    </recommendedName>
    <alternativeName>
        <fullName>DP2</fullName>
    </alternativeName>
    <alternativeName>
        <fullName evidence="1">Exodeoxyribonuclease large subunit</fullName>
        <ecNumber evidence="1">3.1.11.1</ecNumber>
    </alternativeName>
</protein>
<comment type="function">
    <text>Possesses two activities: a DNA synthesis (polymerase) and an exonucleolytic activity that degrades single-stranded DNA in the 3'- to 5'-direction. Has a template-primer preference which is characteristic of a replicative DNA polymerase.</text>
</comment>
<comment type="catalytic activity">
    <reaction>
        <text>DNA(n) + a 2'-deoxyribonucleoside 5'-triphosphate = DNA(n+1) + diphosphate</text>
        <dbReference type="Rhea" id="RHEA:22508"/>
        <dbReference type="Rhea" id="RHEA-COMP:17339"/>
        <dbReference type="Rhea" id="RHEA-COMP:17340"/>
        <dbReference type="ChEBI" id="CHEBI:33019"/>
        <dbReference type="ChEBI" id="CHEBI:61560"/>
        <dbReference type="ChEBI" id="CHEBI:173112"/>
        <dbReference type="EC" id="2.7.7.7"/>
    </reaction>
</comment>
<comment type="catalytic activity">
    <reaction evidence="1">
        <text>Exonucleolytic cleavage in the 3'- to 5'-direction to yield nucleoside 5'-phosphates.</text>
        <dbReference type="EC" id="3.1.11.1"/>
    </reaction>
</comment>
<comment type="subunit">
    <text>Heterodimer of a large subunit and a small subunit.</text>
</comment>
<comment type="similarity">
    <text evidence="3">Belongs to the archaeal DNA polymerase II family.</text>
</comment>